<evidence type="ECO:0000255" key="1">
    <source>
        <dbReference type="HAMAP-Rule" id="MF_00515"/>
    </source>
</evidence>
<comment type="function">
    <text evidence="1">Catalyzes the oxidative demethylation of N-methyl-L-tryptophan.</text>
</comment>
<comment type="catalytic activity">
    <reaction evidence="1">
        <text>N(alpha)-methyl-L-tryptophan + O2 + H2O = L-tryptophan + formaldehyde + H2O2</text>
        <dbReference type="Rhea" id="RHEA:28006"/>
        <dbReference type="ChEBI" id="CHEBI:15377"/>
        <dbReference type="ChEBI" id="CHEBI:15379"/>
        <dbReference type="ChEBI" id="CHEBI:16240"/>
        <dbReference type="ChEBI" id="CHEBI:16842"/>
        <dbReference type="ChEBI" id="CHEBI:57283"/>
        <dbReference type="ChEBI" id="CHEBI:57912"/>
    </reaction>
</comment>
<comment type="cofactor">
    <cofactor evidence="1">
        <name>FAD</name>
        <dbReference type="ChEBI" id="CHEBI:57692"/>
    </cofactor>
    <text evidence="1">Binds 1 FAD per subunit.</text>
</comment>
<comment type="subunit">
    <text evidence="1">Monomer.</text>
</comment>
<comment type="similarity">
    <text evidence="1">Belongs to the MSOX/MTOX family. MTOX subfamily.</text>
</comment>
<name>MTOX_ECOLC</name>
<accession>B1IV43</accession>
<dbReference type="EC" id="1.5.3.-" evidence="1"/>
<dbReference type="EMBL" id="CP000946">
    <property type="protein sequence ID" value="ACA78172.1"/>
    <property type="molecule type" value="Genomic_DNA"/>
</dbReference>
<dbReference type="RefSeq" id="WP_000872811.1">
    <property type="nucleotide sequence ID" value="NZ_MTFT01000032.1"/>
</dbReference>
<dbReference type="SMR" id="B1IV43"/>
<dbReference type="KEGG" id="ecl:EcolC_2541"/>
<dbReference type="HOGENOM" id="CLU_007884_2_1_6"/>
<dbReference type="GO" id="GO:0005829">
    <property type="term" value="C:cytosol"/>
    <property type="evidence" value="ECO:0007669"/>
    <property type="project" value="TreeGrafter"/>
</dbReference>
<dbReference type="GO" id="GO:0050660">
    <property type="term" value="F:flavin adenine dinucleotide binding"/>
    <property type="evidence" value="ECO:0007669"/>
    <property type="project" value="InterPro"/>
</dbReference>
<dbReference type="GO" id="GO:0050131">
    <property type="term" value="F:N-methyl-L-amino-acid oxidase activity"/>
    <property type="evidence" value="ECO:0007669"/>
    <property type="project" value="InterPro"/>
</dbReference>
<dbReference type="GO" id="GO:0008115">
    <property type="term" value="F:sarcosine oxidase activity"/>
    <property type="evidence" value="ECO:0007669"/>
    <property type="project" value="TreeGrafter"/>
</dbReference>
<dbReference type="Gene3D" id="3.30.9.10">
    <property type="entry name" value="D-Amino Acid Oxidase, subunit A, domain 2"/>
    <property type="match status" value="1"/>
</dbReference>
<dbReference type="Gene3D" id="3.50.50.60">
    <property type="entry name" value="FAD/NAD(P)-binding domain"/>
    <property type="match status" value="1"/>
</dbReference>
<dbReference type="HAMAP" id="MF_00515">
    <property type="entry name" value="MTOX"/>
    <property type="match status" value="1"/>
</dbReference>
<dbReference type="InterPro" id="IPR006076">
    <property type="entry name" value="FAD-dep_OxRdtase"/>
</dbReference>
<dbReference type="InterPro" id="IPR036188">
    <property type="entry name" value="FAD/NAD-bd_sf"/>
</dbReference>
<dbReference type="InterPro" id="IPR023493">
    <property type="entry name" value="Me_Trp_Oxase_MTOX"/>
</dbReference>
<dbReference type="InterPro" id="IPR045170">
    <property type="entry name" value="MTOX"/>
</dbReference>
<dbReference type="NCBIfam" id="NF008425">
    <property type="entry name" value="PRK11259.1"/>
    <property type="match status" value="1"/>
</dbReference>
<dbReference type="PANTHER" id="PTHR10961:SF7">
    <property type="entry name" value="FAD DEPENDENT OXIDOREDUCTASE DOMAIN-CONTAINING PROTEIN"/>
    <property type="match status" value="1"/>
</dbReference>
<dbReference type="PANTHER" id="PTHR10961">
    <property type="entry name" value="PEROXISOMAL SARCOSINE OXIDASE"/>
    <property type="match status" value="1"/>
</dbReference>
<dbReference type="Pfam" id="PF01266">
    <property type="entry name" value="DAO"/>
    <property type="match status" value="1"/>
</dbReference>
<dbReference type="SUPFAM" id="SSF54373">
    <property type="entry name" value="FAD-linked reductases, C-terminal domain"/>
    <property type="match status" value="1"/>
</dbReference>
<dbReference type="SUPFAM" id="SSF51905">
    <property type="entry name" value="FAD/NAD(P)-binding domain"/>
    <property type="match status" value="1"/>
</dbReference>
<gene>
    <name evidence="1" type="primary">solA</name>
    <name type="ordered locus">EcolC_2541</name>
</gene>
<sequence length="372" mass="40886">MKYDLIIIGSGSVGAAAGYYATRAGLNVLMTDAHMPPHQHGSHHGDTRLIRHAYGEGEKYVPLVLRAQTLWDELSRHNEDDPIFVRSGVINLGPADSAFLANVAHSAEQWQLNVEKLDAQGIMARWPEIRVPDNYIGLFETDSGFLRSELAIKTWIQLAKEAGCAQLFNCPVTAIRHDDDGVTIETADGEYQAKKAIVCAGTWVKDLLPELPVQPVRKVFAWYQADGRYSVKNKFPAFTGELPNGDQYYGFPAENDALKIGKHNGGQVIHSADERVPFAEVVSDGSEAFPFLRNVLPGIGCCLYGAACTYDNSPDEDFIIDTLPGHDNTLLITGLSGHGFKFASVLGEIAADFAQDKKSDFDLTPFRLSRFQ</sequence>
<reference key="1">
    <citation type="submission" date="2008-02" db="EMBL/GenBank/DDBJ databases">
        <title>Complete sequence of Escherichia coli C str. ATCC 8739.</title>
        <authorList>
            <person name="Copeland A."/>
            <person name="Lucas S."/>
            <person name="Lapidus A."/>
            <person name="Glavina del Rio T."/>
            <person name="Dalin E."/>
            <person name="Tice H."/>
            <person name="Bruce D."/>
            <person name="Goodwin L."/>
            <person name="Pitluck S."/>
            <person name="Kiss H."/>
            <person name="Brettin T."/>
            <person name="Detter J.C."/>
            <person name="Han C."/>
            <person name="Kuske C.R."/>
            <person name="Schmutz J."/>
            <person name="Larimer F."/>
            <person name="Land M."/>
            <person name="Hauser L."/>
            <person name="Kyrpides N."/>
            <person name="Mikhailova N."/>
            <person name="Ingram L."/>
            <person name="Richardson P."/>
        </authorList>
    </citation>
    <scope>NUCLEOTIDE SEQUENCE [LARGE SCALE GENOMIC DNA]</scope>
    <source>
        <strain>ATCC 8739 / DSM 1576 / NBRC 3972 / NCIMB 8545 / WDCM 00012 / Crooks</strain>
    </source>
</reference>
<proteinExistence type="inferred from homology"/>
<feature type="chain" id="PRO_1000081636" description="N-methyl-L-tryptophan oxidase">
    <location>
        <begin position="1"/>
        <end position="372"/>
    </location>
</feature>
<feature type="binding site" evidence="1">
    <location>
        <begin position="4"/>
        <end position="34"/>
    </location>
    <ligand>
        <name>FAD</name>
        <dbReference type="ChEBI" id="CHEBI:57692"/>
    </ligand>
</feature>
<feature type="modified residue" description="S-8alpha-FAD cysteine" evidence="1">
    <location>
        <position position="308"/>
    </location>
</feature>
<organism>
    <name type="scientific">Escherichia coli (strain ATCC 8739 / DSM 1576 / NBRC 3972 / NCIMB 8545 / WDCM 00012 / Crooks)</name>
    <dbReference type="NCBI Taxonomy" id="481805"/>
    <lineage>
        <taxon>Bacteria</taxon>
        <taxon>Pseudomonadati</taxon>
        <taxon>Pseudomonadota</taxon>
        <taxon>Gammaproteobacteria</taxon>
        <taxon>Enterobacterales</taxon>
        <taxon>Enterobacteriaceae</taxon>
        <taxon>Escherichia</taxon>
    </lineage>
</organism>
<protein>
    <recommendedName>
        <fullName evidence="1">N-methyl-L-tryptophan oxidase</fullName>
        <shortName evidence="1">MTOX</shortName>
        <ecNumber evidence="1">1.5.3.-</ecNumber>
    </recommendedName>
</protein>
<keyword id="KW-0274">FAD</keyword>
<keyword id="KW-0285">Flavoprotein</keyword>
<keyword id="KW-0560">Oxidoreductase</keyword>